<evidence type="ECO:0000255" key="1">
    <source>
        <dbReference type="HAMAP-Rule" id="MF_01630"/>
    </source>
</evidence>
<feature type="signal peptide" description="Tat-type signal" evidence="1">
    <location>
        <begin position="1"/>
        <end position="29"/>
    </location>
</feature>
<feature type="chain" id="PRO_1000069713" description="Periplasmic nitrate reductase" evidence="1">
    <location>
        <begin position="30"/>
        <end position="920"/>
    </location>
</feature>
<feature type="domain" description="4Fe-4S Mo/W bis-MGD-type" evidence="1">
    <location>
        <begin position="35"/>
        <end position="91"/>
    </location>
</feature>
<feature type="binding site" evidence="1">
    <location>
        <position position="42"/>
    </location>
    <ligand>
        <name>[4Fe-4S] cluster</name>
        <dbReference type="ChEBI" id="CHEBI:49883"/>
    </ligand>
</feature>
<feature type="binding site" evidence="1">
    <location>
        <position position="45"/>
    </location>
    <ligand>
        <name>[4Fe-4S] cluster</name>
        <dbReference type="ChEBI" id="CHEBI:49883"/>
    </ligand>
</feature>
<feature type="binding site" evidence="1">
    <location>
        <position position="49"/>
    </location>
    <ligand>
        <name>[4Fe-4S] cluster</name>
        <dbReference type="ChEBI" id="CHEBI:49883"/>
    </ligand>
</feature>
<feature type="binding site" evidence="1">
    <location>
        <position position="77"/>
    </location>
    <ligand>
        <name>[4Fe-4S] cluster</name>
        <dbReference type="ChEBI" id="CHEBI:49883"/>
    </ligand>
</feature>
<feature type="binding site" evidence="1">
    <location>
        <position position="79"/>
    </location>
    <ligand>
        <name>Mo-bis(molybdopterin guanine dinucleotide)</name>
        <dbReference type="ChEBI" id="CHEBI:60539"/>
    </ligand>
</feature>
<feature type="binding site" evidence="1">
    <location>
        <position position="147"/>
    </location>
    <ligand>
        <name>Mo-bis(molybdopterin guanine dinucleotide)</name>
        <dbReference type="ChEBI" id="CHEBI:60539"/>
    </ligand>
</feature>
<feature type="binding site" evidence="1">
    <location>
        <position position="172"/>
    </location>
    <ligand>
        <name>Mo-bis(molybdopterin guanine dinucleotide)</name>
        <dbReference type="ChEBI" id="CHEBI:60539"/>
    </ligand>
</feature>
<feature type="binding site" evidence="1">
    <location>
        <position position="176"/>
    </location>
    <ligand>
        <name>Mo-bis(molybdopterin guanine dinucleotide)</name>
        <dbReference type="ChEBI" id="CHEBI:60539"/>
    </ligand>
</feature>
<feature type="binding site" evidence="1">
    <location>
        <begin position="209"/>
        <end position="216"/>
    </location>
    <ligand>
        <name>Mo-bis(molybdopterin guanine dinucleotide)</name>
        <dbReference type="ChEBI" id="CHEBI:60539"/>
    </ligand>
</feature>
<feature type="binding site" evidence="1">
    <location>
        <position position="416"/>
    </location>
    <ligand>
        <name>Mo-bis(molybdopterin guanine dinucleotide)</name>
        <dbReference type="ChEBI" id="CHEBI:60539"/>
    </ligand>
</feature>
<feature type="binding site" evidence="1">
    <location>
        <position position="420"/>
    </location>
    <ligand>
        <name>Mo-bis(molybdopterin guanine dinucleotide)</name>
        <dbReference type="ChEBI" id="CHEBI:60539"/>
    </ligand>
</feature>
<feature type="binding site" evidence="1">
    <location>
        <position position="526"/>
    </location>
    <ligand>
        <name>Mo-bis(molybdopterin guanine dinucleotide)</name>
        <dbReference type="ChEBI" id="CHEBI:60539"/>
    </ligand>
</feature>
<feature type="binding site" evidence="1">
    <location>
        <begin position="551"/>
        <end position="552"/>
    </location>
    <ligand>
        <name>Mo-bis(molybdopterin guanine dinucleotide)</name>
        <dbReference type="ChEBI" id="CHEBI:60539"/>
    </ligand>
</feature>
<feature type="binding site" evidence="1">
    <location>
        <position position="574"/>
    </location>
    <ligand>
        <name>Mo-bis(molybdopterin guanine dinucleotide)</name>
        <dbReference type="ChEBI" id="CHEBI:60539"/>
    </ligand>
</feature>
<feature type="binding site" evidence="1">
    <location>
        <position position="601"/>
    </location>
    <ligand>
        <name>Mo-bis(molybdopterin guanine dinucleotide)</name>
        <dbReference type="ChEBI" id="CHEBI:60539"/>
    </ligand>
</feature>
<feature type="binding site" evidence="1">
    <location>
        <begin position="810"/>
        <end position="819"/>
    </location>
    <ligand>
        <name>Mo-bis(molybdopterin guanine dinucleotide)</name>
        <dbReference type="ChEBI" id="CHEBI:60539"/>
    </ligand>
</feature>
<feature type="binding site" evidence="1">
    <location>
        <position position="886"/>
    </location>
    <ligand>
        <name>substrate</name>
    </ligand>
</feature>
<feature type="binding site" evidence="1">
    <location>
        <position position="894"/>
    </location>
    <ligand>
        <name>Mo-bis(molybdopterin guanine dinucleotide)</name>
        <dbReference type="ChEBI" id="CHEBI:60539"/>
    </ligand>
</feature>
<feature type="binding site" evidence="1">
    <location>
        <position position="911"/>
    </location>
    <ligand>
        <name>Mo-bis(molybdopterin guanine dinucleotide)</name>
        <dbReference type="ChEBI" id="CHEBI:60539"/>
    </ligand>
</feature>
<comment type="function">
    <text evidence="1">Catalytic subunit of the periplasmic nitrate reductase complex NapAB. Receives electrons from NapB and catalyzes the reduction of nitrate to nitrite.</text>
</comment>
<comment type="catalytic activity">
    <reaction evidence="1">
        <text>2 Fe(II)-[cytochrome] + nitrate + 2 H(+) = 2 Fe(III)-[cytochrome] + nitrite + H2O</text>
        <dbReference type="Rhea" id="RHEA:12909"/>
        <dbReference type="Rhea" id="RHEA-COMP:11777"/>
        <dbReference type="Rhea" id="RHEA-COMP:11778"/>
        <dbReference type="ChEBI" id="CHEBI:15377"/>
        <dbReference type="ChEBI" id="CHEBI:15378"/>
        <dbReference type="ChEBI" id="CHEBI:16301"/>
        <dbReference type="ChEBI" id="CHEBI:17632"/>
        <dbReference type="ChEBI" id="CHEBI:29033"/>
        <dbReference type="ChEBI" id="CHEBI:29034"/>
        <dbReference type="EC" id="1.9.6.1"/>
    </reaction>
</comment>
<comment type="cofactor">
    <cofactor evidence="1">
        <name>[4Fe-4S] cluster</name>
        <dbReference type="ChEBI" id="CHEBI:49883"/>
    </cofactor>
    <text evidence="1">Binds 1 [4Fe-4S] cluster.</text>
</comment>
<comment type="cofactor">
    <cofactor evidence="1">
        <name>Mo-bis(molybdopterin guanine dinucleotide)</name>
        <dbReference type="ChEBI" id="CHEBI:60539"/>
    </cofactor>
    <text evidence="1">Binds 1 molybdenum-bis(molybdopterin guanine dinucleotide) (Mo-bis-MGD) cofactor per subunit.</text>
</comment>
<comment type="subunit">
    <text evidence="1">Component of the periplasmic nitrate reductase NapAB complex composed of NapA and NapB.</text>
</comment>
<comment type="subcellular location">
    <subcellularLocation>
        <location evidence="1">Periplasm</location>
    </subcellularLocation>
</comment>
<comment type="PTM">
    <text evidence="1">Predicted to be exported by the Tat system. The position of the signal peptide cleavage has not been experimentally proven.</text>
</comment>
<comment type="similarity">
    <text evidence="1">Belongs to the prokaryotic molybdopterin-containing oxidoreductase family. NasA/NapA/NarB subfamily.</text>
</comment>
<proteinExistence type="inferred from homology"/>
<accession>A7I3Y7</accession>
<reference key="1">
    <citation type="submission" date="2007-07" db="EMBL/GenBank/DDBJ databases">
        <title>Complete genome sequence of Campylobacter hominis ATCC BAA-381, a commensal isolated from the human gastrointestinal tract.</title>
        <authorList>
            <person name="Fouts D.E."/>
            <person name="Mongodin E.F."/>
            <person name="Puiu D."/>
            <person name="Sebastian Y."/>
            <person name="Miller W.G."/>
            <person name="Mandrell R.E."/>
            <person name="Nelson K.E."/>
        </authorList>
    </citation>
    <scope>NUCLEOTIDE SEQUENCE [LARGE SCALE GENOMIC DNA]</scope>
    <source>
        <strain>ATCC BAA-381 / DSM 21671 / CCUG 45161 / LMG 19568 / NCTC 13146 / CH001A</strain>
    </source>
</reference>
<protein>
    <recommendedName>
        <fullName evidence="1">Periplasmic nitrate reductase</fullName>
        <ecNumber evidence="1">1.9.6.1</ecNumber>
    </recommendedName>
</protein>
<sequence>MNRRDFIKSTAAAAACASAGIALPANLNAEENHGWRWDKAVCRFCGTGCGIMVATKNGKIVAVKGDPEAPVNRGLNCIKGYFNAKIMYGDDRITEPLLRVNSKGEFDKHGKFAPVSWKKAFDVMEKEFKKAYKEKGPTGIAVFGSGQYTIQEGYAAAKLVKAGFRSNNIDPNARHCMASAVVGFMQVFGIDEPSGCFDDIELTDTIVTWGANMAEMHPILWSRVNDRKLSAPEKVKVVNLSTFSSRTSSIADIEIIFRPSTDVAIWNYIAREIVYNHPEAIDTEFLKNCEFATGPVDIGYGMRNNPNHPKFSEAEKDTVSHQVSKKLSQAEGVSLAYLGLKAGDTLEMKNAKKAGKHWAISFEEFKKALAPYTLDYVAEIAKGDENESIEQFKEKLQNLANLYIEKNRKIVSFWTMGFNQHTRGTWVNEQSYMVHFLLGKQASPGNGAFSLTGQPSACGTAREVGTFCHRLPADMVVANPKHREITEKIWKLPAGTINPKNGSHFVGLMRDLEDGKVKFAWVQVNNPWHNTANANHWIKAAREMDNFIVVSDCYPGISAKVADLILPSAMIYEKWGAYGNAERRTQHWRQQVLPVGDAMSDTWQILEFAKRFKLKDVWGEQKIDDKLTLPNVLEEAKTMGYDENATLFDILFANDYYKGFKPEKIKFDNSEVNGDTRNVKGSDGEVFKGYGFFIQKALWEEYRKFGLGHGHDLADFDTYHKVRGLKWPVVDGKETSWRFNKKYDPYAKKEETSGDFAFYGNKNKKLDKGDLIGIKGEDKVDINNKAKIFFRPYMDPPEIPSEEYPFWLCTGRVLEHWHSGTMTMRVPELYRAVPEALCYMNPLDAEKLKLSQGDTIWIESRRGKVKVKIDTRGRNIPPVGLVYVPWFDENVFINKVTLDATCPLSSETDYKKCAVKIYKA</sequence>
<dbReference type="EC" id="1.9.6.1" evidence="1"/>
<dbReference type="EMBL" id="CP000776">
    <property type="protein sequence ID" value="ABS51551.1"/>
    <property type="molecule type" value="Genomic_DNA"/>
</dbReference>
<dbReference type="RefSeq" id="WP_012109535.1">
    <property type="nucleotide sequence ID" value="NC_009714.1"/>
</dbReference>
<dbReference type="SMR" id="A7I3Y7"/>
<dbReference type="STRING" id="360107.CHAB381_1716"/>
<dbReference type="KEGG" id="cha:CHAB381_1716"/>
<dbReference type="eggNOG" id="COG0243">
    <property type="taxonomic scope" value="Bacteria"/>
</dbReference>
<dbReference type="HOGENOM" id="CLU_000422_13_4_7"/>
<dbReference type="OrthoDB" id="7376058at2"/>
<dbReference type="Proteomes" id="UP000002407">
    <property type="component" value="Chromosome"/>
</dbReference>
<dbReference type="GO" id="GO:0016020">
    <property type="term" value="C:membrane"/>
    <property type="evidence" value="ECO:0007669"/>
    <property type="project" value="TreeGrafter"/>
</dbReference>
<dbReference type="GO" id="GO:0009325">
    <property type="term" value="C:nitrate reductase complex"/>
    <property type="evidence" value="ECO:0007669"/>
    <property type="project" value="TreeGrafter"/>
</dbReference>
<dbReference type="GO" id="GO:0042597">
    <property type="term" value="C:periplasmic space"/>
    <property type="evidence" value="ECO:0007669"/>
    <property type="project" value="UniProtKB-SubCell"/>
</dbReference>
<dbReference type="GO" id="GO:0051539">
    <property type="term" value="F:4 iron, 4 sulfur cluster binding"/>
    <property type="evidence" value="ECO:0007669"/>
    <property type="project" value="UniProtKB-KW"/>
</dbReference>
<dbReference type="GO" id="GO:0009055">
    <property type="term" value="F:electron transfer activity"/>
    <property type="evidence" value="ECO:0007669"/>
    <property type="project" value="UniProtKB-UniRule"/>
</dbReference>
<dbReference type="GO" id="GO:0005506">
    <property type="term" value="F:iron ion binding"/>
    <property type="evidence" value="ECO:0007669"/>
    <property type="project" value="UniProtKB-UniRule"/>
</dbReference>
<dbReference type="GO" id="GO:0030151">
    <property type="term" value="F:molybdenum ion binding"/>
    <property type="evidence" value="ECO:0007669"/>
    <property type="project" value="InterPro"/>
</dbReference>
<dbReference type="GO" id="GO:0043546">
    <property type="term" value="F:molybdopterin cofactor binding"/>
    <property type="evidence" value="ECO:0007669"/>
    <property type="project" value="InterPro"/>
</dbReference>
<dbReference type="GO" id="GO:0050140">
    <property type="term" value="F:nitrate reductase (cytochrome) activity"/>
    <property type="evidence" value="ECO:0007669"/>
    <property type="project" value="UniProtKB-EC"/>
</dbReference>
<dbReference type="GO" id="GO:0006777">
    <property type="term" value="P:Mo-molybdopterin cofactor biosynthetic process"/>
    <property type="evidence" value="ECO:0007669"/>
    <property type="project" value="UniProtKB-UniRule"/>
</dbReference>
<dbReference type="GO" id="GO:0042128">
    <property type="term" value="P:nitrate assimilation"/>
    <property type="evidence" value="ECO:0007669"/>
    <property type="project" value="UniProtKB-UniRule"/>
</dbReference>
<dbReference type="CDD" id="cd02791">
    <property type="entry name" value="MopB_CT_Nitrate-R-NapA-like"/>
    <property type="match status" value="1"/>
</dbReference>
<dbReference type="FunFam" id="2.40.40.20:FF:000005">
    <property type="entry name" value="Periplasmic nitrate reductase"/>
    <property type="match status" value="1"/>
</dbReference>
<dbReference type="Gene3D" id="2.40.40.20">
    <property type="match status" value="1"/>
</dbReference>
<dbReference type="Gene3D" id="3.30.200.210">
    <property type="match status" value="1"/>
</dbReference>
<dbReference type="Gene3D" id="3.40.50.740">
    <property type="match status" value="1"/>
</dbReference>
<dbReference type="Gene3D" id="2.20.25.90">
    <property type="entry name" value="ADC-like domains"/>
    <property type="match status" value="1"/>
</dbReference>
<dbReference type="Gene3D" id="3.40.228.10">
    <property type="entry name" value="Dimethylsulfoxide Reductase, domain 2"/>
    <property type="match status" value="1"/>
</dbReference>
<dbReference type="HAMAP" id="MF_01630">
    <property type="entry name" value="Nitrate_reduct_NapA"/>
    <property type="match status" value="1"/>
</dbReference>
<dbReference type="InterPro" id="IPR009010">
    <property type="entry name" value="Asp_de-COase-like_dom_sf"/>
</dbReference>
<dbReference type="InterPro" id="IPR041957">
    <property type="entry name" value="CT_Nitrate-R-NapA-like"/>
</dbReference>
<dbReference type="InterPro" id="IPR006657">
    <property type="entry name" value="MoPterin_dinucl-bd_dom"/>
</dbReference>
<dbReference type="InterPro" id="IPR006656">
    <property type="entry name" value="Mopterin_OxRdtase"/>
</dbReference>
<dbReference type="InterPro" id="IPR006963">
    <property type="entry name" value="Mopterin_OxRdtase_4Fe-4S_dom"/>
</dbReference>
<dbReference type="InterPro" id="IPR027467">
    <property type="entry name" value="MopterinOxRdtase_cofactor_BS"/>
</dbReference>
<dbReference type="InterPro" id="IPR010051">
    <property type="entry name" value="Periplasm_NO3_reductase_lsu"/>
</dbReference>
<dbReference type="InterPro" id="IPR050123">
    <property type="entry name" value="Prok_molybdopt-oxidoreductase"/>
</dbReference>
<dbReference type="InterPro" id="IPR006311">
    <property type="entry name" value="TAT_signal"/>
</dbReference>
<dbReference type="InterPro" id="IPR019546">
    <property type="entry name" value="TAT_signal_bac_arc"/>
</dbReference>
<dbReference type="NCBIfam" id="TIGR01706">
    <property type="entry name" value="NAPA"/>
    <property type="match status" value="1"/>
</dbReference>
<dbReference type="NCBIfam" id="NF010055">
    <property type="entry name" value="PRK13532.1"/>
    <property type="match status" value="1"/>
</dbReference>
<dbReference type="NCBIfam" id="TIGR01409">
    <property type="entry name" value="TAT_signal_seq"/>
    <property type="match status" value="1"/>
</dbReference>
<dbReference type="PANTHER" id="PTHR43105:SF11">
    <property type="entry name" value="PERIPLASMIC NITRATE REDUCTASE"/>
    <property type="match status" value="1"/>
</dbReference>
<dbReference type="PANTHER" id="PTHR43105">
    <property type="entry name" value="RESPIRATORY NITRATE REDUCTASE"/>
    <property type="match status" value="1"/>
</dbReference>
<dbReference type="Pfam" id="PF04879">
    <property type="entry name" value="Molybdop_Fe4S4"/>
    <property type="match status" value="1"/>
</dbReference>
<dbReference type="Pfam" id="PF00384">
    <property type="entry name" value="Molybdopterin"/>
    <property type="match status" value="1"/>
</dbReference>
<dbReference type="Pfam" id="PF01568">
    <property type="entry name" value="Molydop_binding"/>
    <property type="match status" value="1"/>
</dbReference>
<dbReference type="SMART" id="SM00926">
    <property type="entry name" value="Molybdop_Fe4S4"/>
    <property type="match status" value="1"/>
</dbReference>
<dbReference type="SUPFAM" id="SSF50692">
    <property type="entry name" value="ADC-like"/>
    <property type="match status" value="1"/>
</dbReference>
<dbReference type="SUPFAM" id="SSF53706">
    <property type="entry name" value="Formate dehydrogenase/DMSO reductase, domains 1-3"/>
    <property type="match status" value="1"/>
</dbReference>
<dbReference type="PROSITE" id="PS51669">
    <property type="entry name" value="4FE4S_MOW_BIS_MGD"/>
    <property type="match status" value="1"/>
</dbReference>
<dbReference type="PROSITE" id="PS00551">
    <property type="entry name" value="MOLYBDOPTERIN_PROK_1"/>
    <property type="match status" value="1"/>
</dbReference>
<dbReference type="PROSITE" id="PS51318">
    <property type="entry name" value="TAT"/>
    <property type="match status" value="1"/>
</dbReference>
<organism>
    <name type="scientific">Campylobacter hominis (strain ATCC BAA-381 / DSM 21671 / CCUG 45161 / LMG 19568 / NCTC 13146 / CH001A)</name>
    <dbReference type="NCBI Taxonomy" id="360107"/>
    <lineage>
        <taxon>Bacteria</taxon>
        <taxon>Pseudomonadati</taxon>
        <taxon>Campylobacterota</taxon>
        <taxon>Epsilonproteobacteria</taxon>
        <taxon>Campylobacterales</taxon>
        <taxon>Campylobacteraceae</taxon>
        <taxon>Campylobacter</taxon>
    </lineage>
</organism>
<name>NAPA_CAMHC</name>
<keyword id="KW-0004">4Fe-4S</keyword>
<keyword id="KW-0249">Electron transport</keyword>
<keyword id="KW-0408">Iron</keyword>
<keyword id="KW-0411">Iron-sulfur</keyword>
<keyword id="KW-0479">Metal-binding</keyword>
<keyword id="KW-0500">Molybdenum</keyword>
<keyword id="KW-0534">Nitrate assimilation</keyword>
<keyword id="KW-0560">Oxidoreductase</keyword>
<keyword id="KW-0574">Periplasm</keyword>
<keyword id="KW-1185">Reference proteome</keyword>
<keyword id="KW-0732">Signal</keyword>
<keyword id="KW-0813">Transport</keyword>
<gene>
    <name evidence="1" type="primary">napA</name>
    <name type="ordered locus">CHAB381_1716</name>
</gene>